<feature type="chain" id="PRO_1000127515" description="D-aminoacyl-tRNA deacylase">
    <location>
        <begin position="1"/>
        <end position="156"/>
    </location>
</feature>
<feature type="short sequence motif" description="Gly-cisPro motif, important for rejection of L-amino acids" evidence="1">
    <location>
        <begin position="142"/>
        <end position="143"/>
    </location>
</feature>
<gene>
    <name evidence="1" type="primary">dtd</name>
    <name type="ordered locus">Daci_1207</name>
</gene>
<name>DTD_DELAS</name>
<sequence length="156" mass="16380">MISILQRVKQARVEIDGQVAGSIGPGLLALVCAERGDTEAEADKLLAKMLKLRIFADDAGKMNRSVQDLDGQGACGGLLIVSQFTLAADTGGGNRPSFTRAAPPAEGERLYDYIVQRARALHPEVATGRFGADMQVHLLNDGPVTIPLSIAPATAA</sequence>
<keyword id="KW-0963">Cytoplasm</keyword>
<keyword id="KW-0378">Hydrolase</keyword>
<keyword id="KW-1185">Reference proteome</keyword>
<keyword id="KW-0694">RNA-binding</keyword>
<keyword id="KW-0820">tRNA-binding</keyword>
<protein>
    <recommendedName>
        <fullName evidence="1">D-aminoacyl-tRNA deacylase</fullName>
        <shortName evidence="1">DTD</shortName>
        <ecNumber evidence="1">3.1.1.96</ecNumber>
    </recommendedName>
    <alternativeName>
        <fullName evidence="1">Gly-tRNA(Ala) deacylase</fullName>
    </alternativeName>
</protein>
<reference key="1">
    <citation type="submission" date="2007-11" db="EMBL/GenBank/DDBJ databases">
        <title>Complete sequence of Delftia acidovorans DSM 14801 / SPH-1.</title>
        <authorList>
            <person name="Copeland A."/>
            <person name="Lucas S."/>
            <person name="Lapidus A."/>
            <person name="Barry K."/>
            <person name="Glavina del Rio T."/>
            <person name="Dalin E."/>
            <person name="Tice H."/>
            <person name="Pitluck S."/>
            <person name="Lowry S."/>
            <person name="Clum A."/>
            <person name="Schmutz J."/>
            <person name="Larimer F."/>
            <person name="Land M."/>
            <person name="Hauser L."/>
            <person name="Kyrpides N."/>
            <person name="Kim E."/>
            <person name="Schleheck D."/>
            <person name="Richardson P."/>
        </authorList>
    </citation>
    <scope>NUCLEOTIDE SEQUENCE [LARGE SCALE GENOMIC DNA]</scope>
    <source>
        <strain>DSM 14801 / SPH-1</strain>
    </source>
</reference>
<dbReference type="EC" id="3.1.1.96" evidence="1"/>
<dbReference type="EMBL" id="CP000884">
    <property type="protein sequence ID" value="ABX33852.1"/>
    <property type="molecule type" value="Genomic_DNA"/>
</dbReference>
<dbReference type="RefSeq" id="WP_012203138.1">
    <property type="nucleotide sequence ID" value="NC_010002.1"/>
</dbReference>
<dbReference type="SMR" id="A9BUE9"/>
<dbReference type="STRING" id="398578.Daci_1207"/>
<dbReference type="GeneID" id="24117329"/>
<dbReference type="KEGG" id="dac:Daci_1207"/>
<dbReference type="eggNOG" id="COG1490">
    <property type="taxonomic scope" value="Bacteria"/>
</dbReference>
<dbReference type="HOGENOM" id="CLU_076901_1_1_4"/>
<dbReference type="Proteomes" id="UP000000784">
    <property type="component" value="Chromosome"/>
</dbReference>
<dbReference type="GO" id="GO:0005737">
    <property type="term" value="C:cytoplasm"/>
    <property type="evidence" value="ECO:0007669"/>
    <property type="project" value="UniProtKB-SubCell"/>
</dbReference>
<dbReference type="GO" id="GO:0051500">
    <property type="term" value="F:D-tyrosyl-tRNA(Tyr) deacylase activity"/>
    <property type="evidence" value="ECO:0007669"/>
    <property type="project" value="TreeGrafter"/>
</dbReference>
<dbReference type="GO" id="GO:0106026">
    <property type="term" value="F:Gly-tRNA(Ala) deacylase activity"/>
    <property type="evidence" value="ECO:0007669"/>
    <property type="project" value="UniProtKB-UniRule"/>
</dbReference>
<dbReference type="GO" id="GO:0043908">
    <property type="term" value="F:Ser(Gly)-tRNA(Ala) hydrolase activity"/>
    <property type="evidence" value="ECO:0007669"/>
    <property type="project" value="UniProtKB-UniRule"/>
</dbReference>
<dbReference type="GO" id="GO:0000049">
    <property type="term" value="F:tRNA binding"/>
    <property type="evidence" value="ECO:0007669"/>
    <property type="project" value="UniProtKB-UniRule"/>
</dbReference>
<dbReference type="GO" id="GO:0019478">
    <property type="term" value="P:D-amino acid catabolic process"/>
    <property type="evidence" value="ECO:0007669"/>
    <property type="project" value="UniProtKB-UniRule"/>
</dbReference>
<dbReference type="CDD" id="cd00563">
    <property type="entry name" value="Dtyr_deacylase"/>
    <property type="match status" value="1"/>
</dbReference>
<dbReference type="FunFam" id="3.50.80.10:FF:000001">
    <property type="entry name" value="D-aminoacyl-tRNA deacylase"/>
    <property type="match status" value="1"/>
</dbReference>
<dbReference type="Gene3D" id="3.50.80.10">
    <property type="entry name" value="D-tyrosyl-tRNA(Tyr) deacylase"/>
    <property type="match status" value="1"/>
</dbReference>
<dbReference type="HAMAP" id="MF_00518">
    <property type="entry name" value="Deacylase_Dtd"/>
    <property type="match status" value="1"/>
</dbReference>
<dbReference type="InterPro" id="IPR003732">
    <property type="entry name" value="Daa-tRNA_deacyls_DTD"/>
</dbReference>
<dbReference type="InterPro" id="IPR023509">
    <property type="entry name" value="DTD-like_sf"/>
</dbReference>
<dbReference type="NCBIfam" id="TIGR00256">
    <property type="entry name" value="D-aminoacyl-tRNA deacylase"/>
    <property type="match status" value="1"/>
</dbReference>
<dbReference type="PANTHER" id="PTHR10472:SF5">
    <property type="entry name" value="D-AMINOACYL-TRNA DEACYLASE 1"/>
    <property type="match status" value="1"/>
</dbReference>
<dbReference type="PANTHER" id="PTHR10472">
    <property type="entry name" value="D-TYROSYL-TRNA TYR DEACYLASE"/>
    <property type="match status" value="1"/>
</dbReference>
<dbReference type="Pfam" id="PF02580">
    <property type="entry name" value="Tyr_Deacylase"/>
    <property type="match status" value="1"/>
</dbReference>
<dbReference type="SUPFAM" id="SSF69500">
    <property type="entry name" value="DTD-like"/>
    <property type="match status" value="1"/>
</dbReference>
<comment type="function">
    <text evidence="1">An aminoacyl-tRNA editing enzyme that deacylates mischarged D-aminoacyl-tRNAs. Also deacylates mischarged glycyl-tRNA(Ala), protecting cells against glycine mischarging by AlaRS. Acts via tRNA-based rather than protein-based catalysis; rejects L-amino acids rather than detecting D-amino acids in the active site. By recycling D-aminoacyl-tRNA to D-amino acids and free tRNA molecules, this enzyme counteracts the toxicity associated with the formation of D-aminoacyl-tRNA entities in vivo and helps enforce protein L-homochirality.</text>
</comment>
<comment type="catalytic activity">
    <reaction evidence="1">
        <text>glycyl-tRNA(Ala) + H2O = tRNA(Ala) + glycine + H(+)</text>
        <dbReference type="Rhea" id="RHEA:53744"/>
        <dbReference type="Rhea" id="RHEA-COMP:9657"/>
        <dbReference type="Rhea" id="RHEA-COMP:13640"/>
        <dbReference type="ChEBI" id="CHEBI:15377"/>
        <dbReference type="ChEBI" id="CHEBI:15378"/>
        <dbReference type="ChEBI" id="CHEBI:57305"/>
        <dbReference type="ChEBI" id="CHEBI:78442"/>
        <dbReference type="ChEBI" id="CHEBI:78522"/>
        <dbReference type="EC" id="3.1.1.96"/>
    </reaction>
</comment>
<comment type="catalytic activity">
    <reaction evidence="1">
        <text>a D-aminoacyl-tRNA + H2O = a tRNA + a D-alpha-amino acid + H(+)</text>
        <dbReference type="Rhea" id="RHEA:13953"/>
        <dbReference type="Rhea" id="RHEA-COMP:10123"/>
        <dbReference type="Rhea" id="RHEA-COMP:10124"/>
        <dbReference type="ChEBI" id="CHEBI:15377"/>
        <dbReference type="ChEBI" id="CHEBI:15378"/>
        <dbReference type="ChEBI" id="CHEBI:59871"/>
        <dbReference type="ChEBI" id="CHEBI:78442"/>
        <dbReference type="ChEBI" id="CHEBI:79333"/>
        <dbReference type="EC" id="3.1.1.96"/>
    </reaction>
</comment>
<comment type="subunit">
    <text evidence="1">Homodimer.</text>
</comment>
<comment type="subcellular location">
    <subcellularLocation>
        <location evidence="1">Cytoplasm</location>
    </subcellularLocation>
</comment>
<comment type="domain">
    <text evidence="1">A Gly-cisPro motif from one monomer fits into the active site of the other monomer to allow specific chiral rejection of L-amino acids.</text>
</comment>
<comment type="similarity">
    <text evidence="1">Belongs to the DTD family.</text>
</comment>
<evidence type="ECO:0000255" key="1">
    <source>
        <dbReference type="HAMAP-Rule" id="MF_00518"/>
    </source>
</evidence>
<organism>
    <name type="scientific">Delftia acidovorans (strain DSM 14801 / SPH-1)</name>
    <dbReference type="NCBI Taxonomy" id="398578"/>
    <lineage>
        <taxon>Bacteria</taxon>
        <taxon>Pseudomonadati</taxon>
        <taxon>Pseudomonadota</taxon>
        <taxon>Betaproteobacteria</taxon>
        <taxon>Burkholderiales</taxon>
        <taxon>Comamonadaceae</taxon>
        <taxon>Delftia</taxon>
    </lineage>
</organism>
<accession>A9BUE9</accession>
<proteinExistence type="inferred from homology"/>